<keyword id="KW-0028">Amino-acid biosynthesis</keyword>
<keyword id="KW-0100">Branched-chain amino acid biosynthesis</keyword>
<keyword id="KW-0963">Cytoplasm</keyword>
<keyword id="KW-0432">Leucine biosynthesis</keyword>
<keyword id="KW-0460">Magnesium</keyword>
<keyword id="KW-0464">Manganese</keyword>
<keyword id="KW-0479">Metal-binding</keyword>
<keyword id="KW-0520">NAD</keyword>
<keyword id="KW-0560">Oxidoreductase</keyword>
<dbReference type="EC" id="1.1.1.85" evidence="1"/>
<dbReference type="EMBL" id="FM211192">
    <property type="protein sequence ID" value="CAR71786.1"/>
    <property type="molecule type" value="Genomic_DNA"/>
</dbReference>
<dbReference type="SMR" id="B8ZS15"/>
<dbReference type="KEGG" id="mlb:MLBr01691"/>
<dbReference type="HOGENOM" id="CLU_031953_0_1_11"/>
<dbReference type="UniPathway" id="UPA00048">
    <property type="reaction ID" value="UER00072"/>
</dbReference>
<dbReference type="Proteomes" id="UP000006900">
    <property type="component" value="Chromosome"/>
</dbReference>
<dbReference type="GO" id="GO:0005737">
    <property type="term" value="C:cytoplasm"/>
    <property type="evidence" value="ECO:0007669"/>
    <property type="project" value="UniProtKB-SubCell"/>
</dbReference>
<dbReference type="GO" id="GO:0003862">
    <property type="term" value="F:3-isopropylmalate dehydrogenase activity"/>
    <property type="evidence" value="ECO:0007669"/>
    <property type="project" value="UniProtKB-UniRule"/>
</dbReference>
<dbReference type="GO" id="GO:0000287">
    <property type="term" value="F:magnesium ion binding"/>
    <property type="evidence" value="ECO:0007669"/>
    <property type="project" value="InterPro"/>
</dbReference>
<dbReference type="GO" id="GO:0051287">
    <property type="term" value="F:NAD binding"/>
    <property type="evidence" value="ECO:0007669"/>
    <property type="project" value="InterPro"/>
</dbReference>
<dbReference type="GO" id="GO:0009098">
    <property type="term" value="P:L-leucine biosynthetic process"/>
    <property type="evidence" value="ECO:0007669"/>
    <property type="project" value="UniProtKB-UniRule"/>
</dbReference>
<dbReference type="Gene3D" id="3.40.718.10">
    <property type="entry name" value="Isopropylmalate Dehydrogenase"/>
    <property type="match status" value="1"/>
</dbReference>
<dbReference type="HAMAP" id="MF_01035">
    <property type="entry name" value="LeuB_type2"/>
    <property type="match status" value="1"/>
</dbReference>
<dbReference type="InterPro" id="IPR050501">
    <property type="entry name" value="ICDH/IPMDH"/>
</dbReference>
<dbReference type="InterPro" id="IPR019818">
    <property type="entry name" value="IsoCit/isopropylmalate_DH_CS"/>
</dbReference>
<dbReference type="InterPro" id="IPR024084">
    <property type="entry name" value="IsoPropMal-DH-like_dom"/>
</dbReference>
<dbReference type="InterPro" id="IPR023698">
    <property type="entry name" value="LeuB_actb"/>
</dbReference>
<dbReference type="NCBIfam" id="NF002898">
    <property type="entry name" value="PRK03437.1"/>
    <property type="match status" value="1"/>
</dbReference>
<dbReference type="PANTHER" id="PTHR43275">
    <property type="entry name" value="D-MALATE DEHYDROGENASE [DECARBOXYLATING]"/>
    <property type="match status" value="1"/>
</dbReference>
<dbReference type="PANTHER" id="PTHR43275:SF1">
    <property type="entry name" value="D-MALATE DEHYDROGENASE [DECARBOXYLATING]"/>
    <property type="match status" value="1"/>
</dbReference>
<dbReference type="Pfam" id="PF00180">
    <property type="entry name" value="Iso_dh"/>
    <property type="match status" value="1"/>
</dbReference>
<dbReference type="SMART" id="SM01329">
    <property type="entry name" value="Iso_dh"/>
    <property type="match status" value="1"/>
</dbReference>
<dbReference type="SUPFAM" id="SSF53659">
    <property type="entry name" value="Isocitrate/Isopropylmalate dehydrogenase-like"/>
    <property type="match status" value="1"/>
</dbReference>
<dbReference type="PROSITE" id="PS00470">
    <property type="entry name" value="IDH_IMDH"/>
    <property type="match status" value="1"/>
</dbReference>
<feature type="chain" id="PRO_1000149452" description="3-isopropylmalate dehydrogenase">
    <location>
        <begin position="1"/>
        <end position="336"/>
    </location>
</feature>
<feature type="binding site" evidence="1">
    <location>
        <position position="87"/>
    </location>
    <ligand>
        <name>substrate</name>
    </ligand>
</feature>
<feature type="binding site" evidence="1">
    <location>
        <position position="97"/>
    </location>
    <ligand>
        <name>substrate</name>
    </ligand>
</feature>
<feature type="binding site" evidence="1">
    <location>
        <position position="121"/>
    </location>
    <ligand>
        <name>substrate</name>
    </ligand>
</feature>
<feature type="binding site" evidence="1">
    <location>
        <position position="211"/>
    </location>
    <ligand>
        <name>Mg(2+)</name>
        <dbReference type="ChEBI" id="CHEBI:18420"/>
    </ligand>
</feature>
<feature type="binding site" evidence="1">
    <location>
        <position position="211"/>
    </location>
    <ligand>
        <name>substrate</name>
    </ligand>
</feature>
<feature type="binding site" evidence="1">
    <location>
        <position position="235"/>
    </location>
    <ligand>
        <name>Mg(2+)</name>
        <dbReference type="ChEBI" id="CHEBI:18420"/>
    </ligand>
</feature>
<feature type="binding site" evidence="1">
    <location>
        <position position="239"/>
    </location>
    <ligand>
        <name>Mg(2+)</name>
        <dbReference type="ChEBI" id="CHEBI:18420"/>
    </ligand>
</feature>
<feature type="binding site" evidence="1">
    <location>
        <begin position="271"/>
        <end position="283"/>
    </location>
    <ligand>
        <name>NAD(+)</name>
        <dbReference type="ChEBI" id="CHEBI:57540"/>
    </ligand>
</feature>
<feature type="site" description="Important for catalysis" evidence="1">
    <location>
        <position position="128"/>
    </location>
</feature>
<feature type="site" description="Important for catalysis" evidence="1">
    <location>
        <position position="178"/>
    </location>
</feature>
<evidence type="ECO:0000255" key="1">
    <source>
        <dbReference type="HAMAP-Rule" id="MF_01035"/>
    </source>
</evidence>
<sequence length="336" mass="35792">MKLAIIGGDGIGPEVVAQAVKILDVVLPGVQKTTYDLGARRYHTTGELLPESVLAELREHDAILLGAVGDPSVPSGVLERGLLLRLRFELDHHINLRPARLYPGVNSLLAGKPDIDFVVVREGTEGPYTGTGGAIRVGTPNEVATEVSVNTAFGVRRVVQDAFERARQRRKHLTLVHKNNVLTYAGTLWCRIVQEVGEKYPDVEVVYQHIDAATIYLVTEPSRFDVIVTDNLFGDIITDLAAAVCGGIALAASGNIDATRTNPSMFEPVHGSAPDIAGQGIADPTAAIMSLALLLAHLGEDEPAARLDQAVASYLATRGNGRFSTGEVGERIAAAL</sequence>
<proteinExistence type="inferred from homology"/>
<gene>
    <name evidence="1" type="primary">leuB</name>
    <name type="ordered locus">MLBr01691</name>
</gene>
<name>LEU3_MYCLB</name>
<organism>
    <name type="scientific">Mycobacterium leprae (strain Br4923)</name>
    <dbReference type="NCBI Taxonomy" id="561304"/>
    <lineage>
        <taxon>Bacteria</taxon>
        <taxon>Bacillati</taxon>
        <taxon>Actinomycetota</taxon>
        <taxon>Actinomycetes</taxon>
        <taxon>Mycobacteriales</taxon>
        <taxon>Mycobacteriaceae</taxon>
        <taxon>Mycobacterium</taxon>
    </lineage>
</organism>
<accession>B8ZS15</accession>
<comment type="function">
    <text evidence="1">Catalyzes the oxidation of 3-carboxy-2-hydroxy-4-methylpentanoate (3-isopropylmalate) to 3-carboxy-4-methyl-2-oxopentanoate. The product decarboxylates to 4-methyl-2 oxopentanoate.</text>
</comment>
<comment type="catalytic activity">
    <reaction evidence="1">
        <text>(2R,3S)-3-isopropylmalate + NAD(+) = 4-methyl-2-oxopentanoate + CO2 + NADH</text>
        <dbReference type="Rhea" id="RHEA:32271"/>
        <dbReference type="ChEBI" id="CHEBI:16526"/>
        <dbReference type="ChEBI" id="CHEBI:17865"/>
        <dbReference type="ChEBI" id="CHEBI:35121"/>
        <dbReference type="ChEBI" id="CHEBI:57540"/>
        <dbReference type="ChEBI" id="CHEBI:57945"/>
        <dbReference type="EC" id="1.1.1.85"/>
    </reaction>
</comment>
<comment type="cofactor">
    <cofactor evidence="1">
        <name>Mg(2+)</name>
        <dbReference type="ChEBI" id="CHEBI:18420"/>
    </cofactor>
    <cofactor evidence="1">
        <name>Mn(2+)</name>
        <dbReference type="ChEBI" id="CHEBI:29035"/>
    </cofactor>
    <text evidence="1">Binds 1 Mg(2+) or Mn(2+) ion per subunit.</text>
</comment>
<comment type="pathway">
    <text evidence="1">Amino-acid biosynthesis; L-leucine biosynthesis; L-leucine from 3-methyl-2-oxobutanoate: step 3/4.</text>
</comment>
<comment type="subunit">
    <text evidence="1">Homodimer.</text>
</comment>
<comment type="subcellular location">
    <subcellularLocation>
        <location evidence="1">Cytoplasm</location>
    </subcellularLocation>
</comment>
<comment type="similarity">
    <text evidence="1">Belongs to the isocitrate and isopropylmalate dehydrogenases family. LeuB type 2 subfamily.</text>
</comment>
<reference key="1">
    <citation type="journal article" date="2009" name="Nat. Genet.">
        <title>Comparative genomic and phylogeographic analysis of Mycobacterium leprae.</title>
        <authorList>
            <person name="Monot M."/>
            <person name="Honore N."/>
            <person name="Garnier T."/>
            <person name="Zidane N."/>
            <person name="Sherafi D."/>
            <person name="Paniz-Mondolfi A."/>
            <person name="Matsuoka M."/>
            <person name="Taylor G.M."/>
            <person name="Donoghue H.D."/>
            <person name="Bouwman A."/>
            <person name="Mays S."/>
            <person name="Watson C."/>
            <person name="Lockwood D."/>
            <person name="Khamispour A."/>
            <person name="Dowlati Y."/>
            <person name="Jianping S."/>
            <person name="Rea T.H."/>
            <person name="Vera-Cabrera L."/>
            <person name="Stefani M.M."/>
            <person name="Banu S."/>
            <person name="Macdonald M."/>
            <person name="Sapkota B.R."/>
            <person name="Spencer J.S."/>
            <person name="Thomas J."/>
            <person name="Harshman K."/>
            <person name="Singh P."/>
            <person name="Busso P."/>
            <person name="Gattiker A."/>
            <person name="Rougemont J."/>
            <person name="Brennan P.J."/>
            <person name="Cole S.T."/>
        </authorList>
    </citation>
    <scope>NUCLEOTIDE SEQUENCE [LARGE SCALE GENOMIC DNA]</scope>
    <source>
        <strain>Br4923</strain>
    </source>
</reference>
<protein>
    <recommendedName>
        <fullName evidence="1">3-isopropylmalate dehydrogenase</fullName>
        <ecNumber evidence="1">1.1.1.85</ecNumber>
    </recommendedName>
    <alternativeName>
        <fullName evidence="1">3-IPM-DH</fullName>
    </alternativeName>
    <alternativeName>
        <fullName evidence="1">Beta-IPM dehydrogenase</fullName>
        <shortName evidence="1">IMDH</shortName>
    </alternativeName>
</protein>